<proteinExistence type="inferred from homology"/>
<gene>
    <name evidence="1" type="primary">betA</name>
    <name type="ordered locus">PBPRB1745</name>
</gene>
<comment type="function">
    <text evidence="1">Involved in the biosynthesis of the osmoprotectant glycine betaine. Catalyzes the oxidation of choline to betaine aldehyde and betaine aldehyde to glycine betaine at the same rate.</text>
</comment>
<comment type="catalytic activity">
    <reaction evidence="1">
        <text>choline + A = betaine aldehyde + AH2</text>
        <dbReference type="Rhea" id="RHEA:17433"/>
        <dbReference type="ChEBI" id="CHEBI:13193"/>
        <dbReference type="ChEBI" id="CHEBI:15354"/>
        <dbReference type="ChEBI" id="CHEBI:15710"/>
        <dbReference type="ChEBI" id="CHEBI:17499"/>
        <dbReference type="EC" id="1.1.99.1"/>
    </reaction>
</comment>
<comment type="catalytic activity">
    <reaction evidence="1">
        <text>betaine aldehyde + NAD(+) + H2O = glycine betaine + NADH + 2 H(+)</text>
        <dbReference type="Rhea" id="RHEA:15305"/>
        <dbReference type="ChEBI" id="CHEBI:15377"/>
        <dbReference type="ChEBI" id="CHEBI:15378"/>
        <dbReference type="ChEBI" id="CHEBI:15710"/>
        <dbReference type="ChEBI" id="CHEBI:17750"/>
        <dbReference type="ChEBI" id="CHEBI:57540"/>
        <dbReference type="ChEBI" id="CHEBI:57945"/>
        <dbReference type="EC" id="1.2.1.8"/>
    </reaction>
</comment>
<comment type="cofactor">
    <cofactor evidence="1">
        <name>FAD</name>
        <dbReference type="ChEBI" id="CHEBI:57692"/>
    </cofactor>
</comment>
<comment type="pathway">
    <text evidence="1">Amine and polyamine biosynthesis; betaine biosynthesis via choline pathway; betaine aldehyde from choline (cytochrome c reductase route): step 1/1.</text>
</comment>
<comment type="similarity">
    <text evidence="1">Belongs to the GMC oxidoreductase family.</text>
</comment>
<accession>Q6LGH5</accession>
<keyword id="KW-0274">FAD</keyword>
<keyword id="KW-0285">Flavoprotein</keyword>
<keyword id="KW-0520">NAD</keyword>
<keyword id="KW-0560">Oxidoreductase</keyword>
<keyword id="KW-1185">Reference proteome</keyword>
<evidence type="ECO:0000255" key="1">
    <source>
        <dbReference type="HAMAP-Rule" id="MF_00750"/>
    </source>
</evidence>
<feature type="chain" id="PRO_0000258927" description="Oxygen-dependent choline dehydrogenase">
    <location>
        <begin position="1"/>
        <end position="568"/>
    </location>
</feature>
<feature type="active site" description="Proton acceptor" evidence="1">
    <location>
        <position position="470"/>
    </location>
</feature>
<feature type="binding site" evidence="1">
    <location>
        <begin position="6"/>
        <end position="35"/>
    </location>
    <ligand>
        <name>FAD</name>
        <dbReference type="ChEBI" id="CHEBI:57692"/>
    </ligand>
</feature>
<protein>
    <recommendedName>
        <fullName evidence="1">Oxygen-dependent choline dehydrogenase</fullName>
        <shortName evidence="1">CDH</shortName>
        <shortName evidence="1">CHD</shortName>
        <ecNumber evidence="1">1.1.99.1</ecNumber>
    </recommendedName>
    <alternativeName>
        <fullName evidence="1">Betaine aldehyde dehydrogenase</fullName>
        <shortName evidence="1">BADH</shortName>
        <ecNumber evidence="1">1.2.1.8</ecNumber>
    </alternativeName>
</protein>
<dbReference type="EC" id="1.1.99.1" evidence="1"/>
<dbReference type="EC" id="1.2.1.8" evidence="1"/>
<dbReference type="EMBL" id="CR378680">
    <property type="protein sequence ID" value="CAG23605.1"/>
    <property type="molecule type" value="Genomic_DNA"/>
</dbReference>
<dbReference type="RefSeq" id="WP_011221752.1">
    <property type="nucleotide sequence ID" value="NC_006371.1"/>
</dbReference>
<dbReference type="SMR" id="Q6LGH5"/>
<dbReference type="STRING" id="298386.PBPRB1745"/>
<dbReference type="KEGG" id="ppr:PBPRB1745"/>
<dbReference type="eggNOG" id="COG2303">
    <property type="taxonomic scope" value="Bacteria"/>
</dbReference>
<dbReference type="HOGENOM" id="CLU_002865_7_1_6"/>
<dbReference type="UniPathway" id="UPA00529">
    <property type="reaction ID" value="UER00385"/>
</dbReference>
<dbReference type="Proteomes" id="UP000000593">
    <property type="component" value="Chromosome 2"/>
</dbReference>
<dbReference type="GO" id="GO:0016020">
    <property type="term" value="C:membrane"/>
    <property type="evidence" value="ECO:0007669"/>
    <property type="project" value="TreeGrafter"/>
</dbReference>
<dbReference type="GO" id="GO:0008802">
    <property type="term" value="F:betaine-aldehyde dehydrogenase (NAD+) activity"/>
    <property type="evidence" value="ECO:0007669"/>
    <property type="project" value="UniProtKB-EC"/>
</dbReference>
<dbReference type="GO" id="GO:0008812">
    <property type="term" value="F:choline dehydrogenase activity"/>
    <property type="evidence" value="ECO:0007669"/>
    <property type="project" value="UniProtKB-UniRule"/>
</dbReference>
<dbReference type="GO" id="GO:0050660">
    <property type="term" value="F:flavin adenine dinucleotide binding"/>
    <property type="evidence" value="ECO:0007669"/>
    <property type="project" value="InterPro"/>
</dbReference>
<dbReference type="GO" id="GO:0019285">
    <property type="term" value="P:glycine betaine biosynthetic process from choline"/>
    <property type="evidence" value="ECO:0007669"/>
    <property type="project" value="UniProtKB-UniRule"/>
</dbReference>
<dbReference type="Gene3D" id="3.50.50.60">
    <property type="entry name" value="FAD/NAD(P)-binding domain"/>
    <property type="match status" value="1"/>
</dbReference>
<dbReference type="Gene3D" id="3.30.560.10">
    <property type="entry name" value="Glucose Oxidase, domain 3"/>
    <property type="match status" value="1"/>
</dbReference>
<dbReference type="HAMAP" id="MF_00750">
    <property type="entry name" value="Choline_dehydrogen"/>
    <property type="match status" value="1"/>
</dbReference>
<dbReference type="InterPro" id="IPR011533">
    <property type="entry name" value="BetA"/>
</dbReference>
<dbReference type="InterPro" id="IPR036188">
    <property type="entry name" value="FAD/NAD-bd_sf"/>
</dbReference>
<dbReference type="InterPro" id="IPR012132">
    <property type="entry name" value="GMC_OxRdtase"/>
</dbReference>
<dbReference type="InterPro" id="IPR000172">
    <property type="entry name" value="GMC_OxRdtase_N"/>
</dbReference>
<dbReference type="InterPro" id="IPR007867">
    <property type="entry name" value="GMC_OxRtase_C"/>
</dbReference>
<dbReference type="NCBIfam" id="TIGR01810">
    <property type="entry name" value="betA"/>
    <property type="match status" value="1"/>
</dbReference>
<dbReference type="NCBIfam" id="NF002550">
    <property type="entry name" value="PRK02106.1"/>
    <property type="match status" value="1"/>
</dbReference>
<dbReference type="PANTHER" id="PTHR11552:SF147">
    <property type="entry name" value="CHOLINE DEHYDROGENASE, MITOCHONDRIAL"/>
    <property type="match status" value="1"/>
</dbReference>
<dbReference type="PANTHER" id="PTHR11552">
    <property type="entry name" value="GLUCOSE-METHANOL-CHOLINE GMC OXIDOREDUCTASE"/>
    <property type="match status" value="1"/>
</dbReference>
<dbReference type="Pfam" id="PF05199">
    <property type="entry name" value="GMC_oxred_C"/>
    <property type="match status" value="1"/>
</dbReference>
<dbReference type="Pfam" id="PF00732">
    <property type="entry name" value="GMC_oxred_N"/>
    <property type="match status" value="1"/>
</dbReference>
<dbReference type="PIRSF" id="PIRSF000137">
    <property type="entry name" value="Alcohol_oxidase"/>
    <property type="match status" value="1"/>
</dbReference>
<dbReference type="SUPFAM" id="SSF54373">
    <property type="entry name" value="FAD-linked reductases, C-terminal domain"/>
    <property type="match status" value="1"/>
</dbReference>
<dbReference type="SUPFAM" id="SSF51905">
    <property type="entry name" value="FAD/NAD(P)-binding domain"/>
    <property type="match status" value="1"/>
</dbReference>
<dbReference type="PROSITE" id="PS00623">
    <property type="entry name" value="GMC_OXRED_1"/>
    <property type="match status" value="1"/>
</dbReference>
<dbReference type="PROSITE" id="PS00624">
    <property type="entry name" value="GMC_OXRED_2"/>
    <property type="match status" value="1"/>
</dbReference>
<name>BETA_PHOPR</name>
<sequence>MNTTYDYIIVGAGSAGCVLADRLSASGEHYILLLEAGGSDRSIFIQMPTALSYPMNSEKYAWQFETQPEAGLDSRSLHCPRGRVLGGSSSINGMVYVRGHACDYDEWVEQGAEGWSYQECLPYFRRAESWIHGEDTYRGGDGPVGTCNGNDMELNPLYQAFIDAGQQAGYPKTDDYNGYQQEGFGPMHMTVDKGIRASTSNAYLRRAMKRSNLTVRKGVVTRKVLIKNKQAIGVEIEVGGKVQSVYANTEVLLSAGSVGSPQLLQLSGIGPKAVLEQAGIAVKHDLPGVGENLQDHLEVYFQYACHQPITLNSKLGLISKGLIGTRWILQKDGLGATNHFESCAFIRSRAGLKWPNIQYHFLPAAMRYDGQAAFDGHGFQVHVGPNKPQSRGRIWITSADPHQKPNIEFNYISTEQDKQDWRDCIRLTREILAQPAMDDYRGEEIQPGADITSDEAMDAWVRQNVESAYHPSCTCKMGSDNDPMTVLNKDCQVRGIDSLRVIDSSVFPTIPNGNLNAPTIMVAEKAADAILGNTPLSPSNAPTWIAPQWETEQRNGAAQRPMFHQQRK</sequence>
<organism>
    <name type="scientific">Photobacterium profundum (strain SS9)</name>
    <dbReference type="NCBI Taxonomy" id="298386"/>
    <lineage>
        <taxon>Bacteria</taxon>
        <taxon>Pseudomonadati</taxon>
        <taxon>Pseudomonadota</taxon>
        <taxon>Gammaproteobacteria</taxon>
        <taxon>Vibrionales</taxon>
        <taxon>Vibrionaceae</taxon>
        <taxon>Photobacterium</taxon>
    </lineage>
</organism>
<reference key="1">
    <citation type="journal article" date="2005" name="Science">
        <title>Life at depth: Photobacterium profundum genome sequence and expression analysis.</title>
        <authorList>
            <person name="Vezzi A."/>
            <person name="Campanaro S."/>
            <person name="D'Angelo M."/>
            <person name="Simonato F."/>
            <person name="Vitulo N."/>
            <person name="Lauro F.M."/>
            <person name="Cestaro A."/>
            <person name="Malacrida G."/>
            <person name="Simionati B."/>
            <person name="Cannata N."/>
            <person name="Romualdi C."/>
            <person name="Bartlett D.H."/>
            <person name="Valle G."/>
        </authorList>
    </citation>
    <scope>NUCLEOTIDE SEQUENCE [LARGE SCALE GENOMIC DNA]</scope>
    <source>
        <strain>ATCC BAA-1253 / SS9</strain>
    </source>
</reference>